<dbReference type="EMBL" id="L47971">
    <property type="protein sequence ID" value="AAB06824.1"/>
    <property type="molecule type" value="Genomic_DNA"/>
</dbReference>
<dbReference type="EMBL" id="M26414">
    <property type="protein sequence ID" value="AAA22215.1"/>
    <property type="molecule type" value="Genomic_DNA"/>
</dbReference>
<dbReference type="EMBL" id="AL009126">
    <property type="protein sequence ID" value="CAB11917.2"/>
    <property type="molecule type" value="Genomic_DNA"/>
</dbReference>
<dbReference type="EMBL" id="M13957">
    <property type="protein sequence ID" value="AAA22706.1"/>
    <property type="molecule type" value="Genomic_DNA"/>
</dbReference>
<dbReference type="PIR" id="C32307">
    <property type="entry name" value="R3BS13"/>
</dbReference>
<dbReference type="RefSeq" id="NP_388022.2">
    <property type="nucleotide sequence ID" value="NC_000964.3"/>
</dbReference>
<dbReference type="RefSeq" id="WP_003235095.1">
    <property type="nucleotide sequence ID" value="NZ_OZ025638.1"/>
</dbReference>
<dbReference type="PDB" id="3J9W">
    <property type="method" value="EM"/>
    <property type="resolution" value="3.90 A"/>
    <property type="chains" value="AM=1-121"/>
</dbReference>
<dbReference type="PDB" id="5NJT">
    <property type="method" value="EM"/>
    <property type="resolution" value="3.80 A"/>
    <property type="chains" value="M=2-112"/>
</dbReference>
<dbReference type="PDB" id="6HA1">
    <property type="method" value="EM"/>
    <property type="resolution" value="3.10 A"/>
    <property type="chains" value="m=1-121"/>
</dbReference>
<dbReference type="PDB" id="6HA8">
    <property type="method" value="EM"/>
    <property type="resolution" value="3.50 A"/>
    <property type="chains" value="m=1-121"/>
</dbReference>
<dbReference type="PDB" id="6HTQ">
    <property type="method" value="EM"/>
    <property type="resolution" value="4.50 A"/>
    <property type="chains" value="m=3-110"/>
</dbReference>
<dbReference type="PDB" id="7O5B">
    <property type="method" value="EM"/>
    <property type="resolution" value="3.33 A"/>
    <property type="chains" value="M=1-121"/>
</dbReference>
<dbReference type="PDB" id="7QGU">
    <property type="method" value="EM"/>
    <property type="resolution" value="4.75 A"/>
    <property type="chains" value="r=1-121"/>
</dbReference>
<dbReference type="PDB" id="7QH4">
    <property type="method" value="EM"/>
    <property type="resolution" value="5.45 A"/>
    <property type="chains" value="q=1-121"/>
</dbReference>
<dbReference type="PDB" id="7QV1">
    <property type="method" value="EM"/>
    <property type="resolution" value="3.50 A"/>
    <property type="chains" value="m=1-121"/>
</dbReference>
<dbReference type="PDB" id="7QV2">
    <property type="method" value="EM"/>
    <property type="resolution" value="3.50 A"/>
    <property type="chains" value="m=1-121"/>
</dbReference>
<dbReference type="PDB" id="7QV3">
    <property type="method" value="EM"/>
    <property type="resolution" value="5.14 A"/>
    <property type="chains" value="m=1-121"/>
</dbReference>
<dbReference type="PDB" id="8BUU">
    <property type="method" value="EM"/>
    <property type="resolution" value="2.90 A"/>
    <property type="chains" value="m=1-121"/>
</dbReference>
<dbReference type="PDB" id="8CDU">
    <property type="method" value="EM"/>
    <property type="resolution" value="3.10 A"/>
    <property type="chains" value="M=1-121"/>
</dbReference>
<dbReference type="PDB" id="8CDV">
    <property type="method" value="EM"/>
    <property type="resolution" value="4.73 A"/>
    <property type="chains" value="M=1-121"/>
</dbReference>
<dbReference type="PDB" id="8CEC">
    <property type="method" value="EM"/>
    <property type="resolution" value="3.57 A"/>
    <property type="chains" value="X=1-121"/>
</dbReference>
<dbReference type="PDB" id="8CED">
    <property type="method" value="EM"/>
    <property type="resolution" value="4.15 A"/>
    <property type="chains" value="M=1-121"/>
</dbReference>
<dbReference type="PDB" id="8CEE">
    <property type="method" value="EM"/>
    <property type="resolution" value="3.70 A"/>
    <property type="chains" value="M=1-121"/>
</dbReference>
<dbReference type="PDB" id="8QCQ">
    <property type="method" value="EM"/>
    <property type="resolution" value="2.30 A"/>
    <property type="chains" value="m=1-121"/>
</dbReference>
<dbReference type="PDB" id="8QPP">
    <property type="method" value="EM"/>
    <property type="resolution" value="3.40 A"/>
    <property type="chains" value="M=1-121"/>
</dbReference>
<dbReference type="PDB" id="8R55">
    <property type="method" value="EM"/>
    <property type="resolution" value="3.57 A"/>
    <property type="chains" value="M=1-121"/>
</dbReference>
<dbReference type="PDBsum" id="3J9W"/>
<dbReference type="PDBsum" id="5NJT"/>
<dbReference type="PDBsum" id="6HA1"/>
<dbReference type="PDBsum" id="6HA8"/>
<dbReference type="PDBsum" id="6HTQ"/>
<dbReference type="PDBsum" id="7O5B"/>
<dbReference type="PDBsum" id="7QGU"/>
<dbReference type="PDBsum" id="7QH4"/>
<dbReference type="PDBsum" id="7QV1"/>
<dbReference type="PDBsum" id="7QV2"/>
<dbReference type="PDBsum" id="7QV3"/>
<dbReference type="PDBsum" id="8BUU"/>
<dbReference type="PDBsum" id="8CDU"/>
<dbReference type="PDBsum" id="8CDV"/>
<dbReference type="PDBsum" id="8CEC"/>
<dbReference type="PDBsum" id="8CED"/>
<dbReference type="PDBsum" id="8CEE"/>
<dbReference type="PDBsum" id="8QCQ"/>
<dbReference type="PDBsum" id="8QPP"/>
<dbReference type="PDBsum" id="8R55"/>
<dbReference type="EMDB" id="EMD-0176"/>
<dbReference type="EMDB" id="EMD-0177"/>
<dbReference type="EMDB" id="EMD-0270"/>
<dbReference type="EMDB" id="EMD-12734"/>
<dbReference type="EMDB" id="EMD-14157"/>
<dbReference type="EMDB" id="EMD-14158"/>
<dbReference type="EMDB" id="EMD-14159"/>
<dbReference type="EMDB" id="EMD-16246"/>
<dbReference type="EMDB" id="EMD-16595"/>
<dbReference type="EMDB" id="EMD-16596"/>
<dbReference type="EMDB" id="EMD-16605"/>
<dbReference type="EMDB" id="EMD-16606"/>
<dbReference type="EMDB" id="EMD-16607"/>
<dbReference type="EMDB" id="EMD-18332"/>
<dbReference type="EMDB" id="EMD-3656"/>
<dbReference type="SMR" id="P20282"/>
<dbReference type="FunCoup" id="P20282">
    <property type="interactions" value="747"/>
</dbReference>
<dbReference type="STRING" id="224308.BSU01410"/>
<dbReference type="jPOST" id="P20282"/>
<dbReference type="PaxDb" id="224308-BSU01410"/>
<dbReference type="EnsemblBacteria" id="CAB11917">
    <property type="protein sequence ID" value="CAB11917"/>
    <property type="gene ID" value="BSU_01410"/>
</dbReference>
<dbReference type="GeneID" id="86875460"/>
<dbReference type="GeneID" id="938928"/>
<dbReference type="KEGG" id="bsu:BSU01410"/>
<dbReference type="PATRIC" id="fig|224308.179.peg.145"/>
<dbReference type="eggNOG" id="COG0099">
    <property type="taxonomic scope" value="Bacteria"/>
</dbReference>
<dbReference type="InParanoid" id="P20282"/>
<dbReference type="OrthoDB" id="9803610at2"/>
<dbReference type="PhylomeDB" id="P20282"/>
<dbReference type="BioCyc" id="BSUB:BSU01410-MONOMER"/>
<dbReference type="PRO" id="PR:P20282"/>
<dbReference type="Proteomes" id="UP000001570">
    <property type="component" value="Chromosome"/>
</dbReference>
<dbReference type="GO" id="GO:0005829">
    <property type="term" value="C:cytosol"/>
    <property type="evidence" value="ECO:0000318"/>
    <property type="project" value="GO_Central"/>
</dbReference>
<dbReference type="GO" id="GO:0015935">
    <property type="term" value="C:small ribosomal subunit"/>
    <property type="evidence" value="ECO:0000318"/>
    <property type="project" value="GO_Central"/>
</dbReference>
<dbReference type="GO" id="GO:0019843">
    <property type="term" value="F:rRNA binding"/>
    <property type="evidence" value="ECO:0007669"/>
    <property type="project" value="UniProtKB-UniRule"/>
</dbReference>
<dbReference type="GO" id="GO:0003735">
    <property type="term" value="F:structural constituent of ribosome"/>
    <property type="evidence" value="ECO:0007669"/>
    <property type="project" value="InterPro"/>
</dbReference>
<dbReference type="GO" id="GO:0000049">
    <property type="term" value="F:tRNA binding"/>
    <property type="evidence" value="ECO:0007669"/>
    <property type="project" value="UniProtKB-UniRule"/>
</dbReference>
<dbReference type="GO" id="GO:0006412">
    <property type="term" value="P:translation"/>
    <property type="evidence" value="ECO:0007669"/>
    <property type="project" value="UniProtKB-UniRule"/>
</dbReference>
<dbReference type="FunFam" id="1.10.8.50:FF:000001">
    <property type="entry name" value="30S ribosomal protein S13"/>
    <property type="match status" value="1"/>
</dbReference>
<dbReference type="FunFam" id="4.10.910.10:FF:000001">
    <property type="entry name" value="30S ribosomal protein S13"/>
    <property type="match status" value="1"/>
</dbReference>
<dbReference type="Gene3D" id="1.10.8.50">
    <property type="match status" value="1"/>
</dbReference>
<dbReference type="Gene3D" id="4.10.910.10">
    <property type="entry name" value="30s ribosomal protein s13, domain 2"/>
    <property type="match status" value="1"/>
</dbReference>
<dbReference type="HAMAP" id="MF_01315">
    <property type="entry name" value="Ribosomal_uS13"/>
    <property type="match status" value="1"/>
</dbReference>
<dbReference type="InterPro" id="IPR027437">
    <property type="entry name" value="Rbsml_uS13_C"/>
</dbReference>
<dbReference type="InterPro" id="IPR001892">
    <property type="entry name" value="Ribosomal_uS13"/>
</dbReference>
<dbReference type="InterPro" id="IPR010979">
    <property type="entry name" value="Ribosomal_uS13-like_H2TH"/>
</dbReference>
<dbReference type="InterPro" id="IPR019980">
    <property type="entry name" value="Ribosomal_uS13_bac-type"/>
</dbReference>
<dbReference type="InterPro" id="IPR018269">
    <property type="entry name" value="Ribosomal_uS13_CS"/>
</dbReference>
<dbReference type="NCBIfam" id="TIGR03631">
    <property type="entry name" value="uS13_bact"/>
    <property type="match status" value="1"/>
</dbReference>
<dbReference type="PANTHER" id="PTHR10871">
    <property type="entry name" value="30S RIBOSOMAL PROTEIN S13/40S RIBOSOMAL PROTEIN S18"/>
    <property type="match status" value="1"/>
</dbReference>
<dbReference type="PANTHER" id="PTHR10871:SF1">
    <property type="entry name" value="SMALL RIBOSOMAL SUBUNIT PROTEIN US13M"/>
    <property type="match status" value="1"/>
</dbReference>
<dbReference type="Pfam" id="PF00416">
    <property type="entry name" value="Ribosomal_S13"/>
    <property type="match status" value="1"/>
</dbReference>
<dbReference type="PIRSF" id="PIRSF002134">
    <property type="entry name" value="Ribosomal_S13"/>
    <property type="match status" value="1"/>
</dbReference>
<dbReference type="SUPFAM" id="SSF46946">
    <property type="entry name" value="S13-like H2TH domain"/>
    <property type="match status" value="1"/>
</dbReference>
<dbReference type="PROSITE" id="PS00646">
    <property type="entry name" value="RIBOSOMAL_S13_1"/>
    <property type="match status" value="1"/>
</dbReference>
<dbReference type="PROSITE" id="PS50159">
    <property type="entry name" value="RIBOSOMAL_S13_2"/>
    <property type="match status" value="1"/>
</dbReference>
<feature type="initiator methionine" description="Removed" evidence="4">
    <location>
        <position position="1"/>
    </location>
</feature>
<feature type="chain" id="PRO_0000132065" description="Small ribosomal subunit protein uS13">
    <location>
        <begin position="2"/>
        <end position="121"/>
    </location>
</feature>
<feature type="region of interest" description="Disordered" evidence="2">
    <location>
        <begin position="93"/>
        <end position="121"/>
    </location>
</feature>
<feature type="compositionally biased region" description="Basic residues" evidence="2">
    <location>
        <begin position="106"/>
        <end position="121"/>
    </location>
</feature>
<feature type="sequence conflict" description="In Ref. 1; AAA22215." evidence="5" ref="1">
    <original>S</original>
    <variation>T</variation>
    <location>
        <position position="85"/>
    </location>
</feature>
<feature type="strand" evidence="8">
    <location>
        <begin position="11"/>
        <end position="14"/>
    </location>
</feature>
<feature type="helix" evidence="8">
    <location>
        <begin position="15"/>
        <end position="20"/>
    </location>
</feature>
<feature type="helix" evidence="8">
    <location>
        <begin position="27"/>
        <end position="36"/>
    </location>
</feature>
<feature type="strand" evidence="8">
    <location>
        <begin position="41"/>
        <end position="45"/>
    </location>
</feature>
<feature type="helix" evidence="8">
    <location>
        <begin position="50"/>
        <end position="61"/>
    </location>
</feature>
<feature type="helix" evidence="8">
    <location>
        <begin position="67"/>
        <end position="81"/>
    </location>
</feature>
<feature type="turn" evidence="8">
    <location>
        <begin position="82"/>
        <end position="84"/>
    </location>
</feature>
<feature type="helix" evidence="8">
    <location>
        <begin position="86"/>
        <end position="93"/>
    </location>
</feature>
<feature type="strand" evidence="8">
    <location>
        <begin position="97"/>
        <end position="99"/>
    </location>
</feature>
<feature type="strand" evidence="8">
    <location>
        <begin position="102"/>
        <end position="105"/>
    </location>
</feature>
<feature type="turn" evidence="8">
    <location>
        <begin position="107"/>
        <end position="109"/>
    </location>
</feature>
<protein>
    <recommendedName>
        <fullName evidence="1">Small ribosomal subunit protein uS13</fullName>
    </recommendedName>
    <alternativeName>
        <fullName evidence="5">30S ribosomal protein S13</fullName>
    </alternativeName>
    <alternativeName>
        <fullName>BS14</fullName>
    </alternativeName>
</protein>
<accession>P20282</accession>
<reference key="1">
    <citation type="journal article" date="1989" name="J. Bacteriol.">
        <title>Gene encoding the alpha core subunit of Bacillus subtilis RNA polymerase is cotranscribed with the genes for initiation factor 1 and ribosomal proteins B, S13, S11, and L17.</title>
        <authorList>
            <person name="Boylan S.A."/>
            <person name="Suh J.-W."/>
            <person name="Thomas S.M."/>
            <person name="Price C.W."/>
        </authorList>
    </citation>
    <scope>NUCLEOTIDE SEQUENCE [GENOMIC DNA]</scope>
</reference>
<reference key="2">
    <citation type="journal article" date="1996" name="Gene">
        <title>Genetic and transcriptional organization of the Bacillus subtilis spc-alpha region.</title>
        <authorList>
            <person name="Suh J.-W."/>
            <person name="Boylan S.A."/>
            <person name="Oh S.H."/>
            <person name="Price C.W."/>
        </authorList>
    </citation>
    <scope>NUCLEOTIDE SEQUENCE [GENOMIC DNA]</scope>
    <source>
        <strain>168 / Marburg / ATCC 6051 / DSM 10 / JCM 1465 / NBRC 13719 / NCIMB 3610 / NRRL NRS-744 / VKM B-501</strain>
    </source>
</reference>
<reference key="3">
    <citation type="journal article" date="1997" name="Nature">
        <title>The complete genome sequence of the Gram-positive bacterium Bacillus subtilis.</title>
        <authorList>
            <person name="Kunst F."/>
            <person name="Ogasawara N."/>
            <person name="Moszer I."/>
            <person name="Albertini A.M."/>
            <person name="Alloni G."/>
            <person name="Azevedo V."/>
            <person name="Bertero M.G."/>
            <person name="Bessieres P."/>
            <person name="Bolotin A."/>
            <person name="Borchert S."/>
            <person name="Borriss R."/>
            <person name="Boursier L."/>
            <person name="Brans A."/>
            <person name="Braun M."/>
            <person name="Brignell S.C."/>
            <person name="Bron S."/>
            <person name="Brouillet S."/>
            <person name="Bruschi C.V."/>
            <person name="Caldwell B."/>
            <person name="Capuano V."/>
            <person name="Carter N.M."/>
            <person name="Choi S.-K."/>
            <person name="Codani J.-J."/>
            <person name="Connerton I.F."/>
            <person name="Cummings N.J."/>
            <person name="Daniel R.A."/>
            <person name="Denizot F."/>
            <person name="Devine K.M."/>
            <person name="Duesterhoeft A."/>
            <person name="Ehrlich S.D."/>
            <person name="Emmerson P.T."/>
            <person name="Entian K.-D."/>
            <person name="Errington J."/>
            <person name="Fabret C."/>
            <person name="Ferrari E."/>
            <person name="Foulger D."/>
            <person name="Fritz C."/>
            <person name="Fujita M."/>
            <person name="Fujita Y."/>
            <person name="Fuma S."/>
            <person name="Galizzi A."/>
            <person name="Galleron N."/>
            <person name="Ghim S.-Y."/>
            <person name="Glaser P."/>
            <person name="Goffeau A."/>
            <person name="Golightly E.J."/>
            <person name="Grandi G."/>
            <person name="Guiseppi G."/>
            <person name="Guy B.J."/>
            <person name="Haga K."/>
            <person name="Haiech J."/>
            <person name="Harwood C.R."/>
            <person name="Henaut A."/>
            <person name="Hilbert H."/>
            <person name="Holsappel S."/>
            <person name="Hosono S."/>
            <person name="Hullo M.-F."/>
            <person name="Itaya M."/>
            <person name="Jones L.-M."/>
            <person name="Joris B."/>
            <person name="Karamata D."/>
            <person name="Kasahara Y."/>
            <person name="Klaerr-Blanchard M."/>
            <person name="Klein C."/>
            <person name="Kobayashi Y."/>
            <person name="Koetter P."/>
            <person name="Koningstein G."/>
            <person name="Krogh S."/>
            <person name="Kumano M."/>
            <person name="Kurita K."/>
            <person name="Lapidus A."/>
            <person name="Lardinois S."/>
            <person name="Lauber J."/>
            <person name="Lazarevic V."/>
            <person name="Lee S.-M."/>
            <person name="Levine A."/>
            <person name="Liu H."/>
            <person name="Masuda S."/>
            <person name="Mauel C."/>
            <person name="Medigue C."/>
            <person name="Medina N."/>
            <person name="Mellado R.P."/>
            <person name="Mizuno M."/>
            <person name="Moestl D."/>
            <person name="Nakai S."/>
            <person name="Noback M."/>
            <person name="Noone D."/>
            <person name="O'Reilly M."/>
            <person name="Ogawa K."/>
            <person name="Ogiwara A."/>
            <person name="Oudega B."/>
            <person name="Park S.-H."/>
            <person name="Parro V."/>
            <person name="Pohl T.M."/>
            <person name="Portetelle D."/>
            <person name="Porwollik S."/>
            <person name="Prescott A.M."/>
            <person name="Presecan E."/>
            <person name="Pujic P."/>
            <person name="Purnelle B."/>
            <person name="Rapoport G."/>
            <person name="Rey M."/>
            <person name="Reynolds S."/>
            <person name="Rieger M."/>
            <person name="Rivolta C."/>
            <person name="Rocha E."/>
            <person name="Roche B."/>
            <person name="Rose M."/>
            <person name="Sadaie Y."/>
            <person name="Sato T."/>
            <person name="Scanlan E."/>
            <person name="Schleich S."/>
            <person name="Schroeter R."/>
            <person name="Scoffone F."/>
            <person name="Sekiguchi J."/>
            <person name="Sekowska A."/>
            <person name="Seror S.J."/>
            <person name="Serror P."/>
            <person name="Shin B.-S."/>
            <person name="Soldo B."/>
            <person name="Sorokin A."/>
            <person name="Tacconi E."/>
            <person name="Takagi T."/>
            <person name="Takahashi H."/>
            <person name="Takemaru K."/>
            <person name="Takeuchi M."/>
            <person name="Tamakoshi A."/>
            <person name="Tanaka T."/>
            <person name="Terpstra P."/>
            <person name="Tognoni A."/>
            <person name="Tosato V."/>
            <person name="Uchiyama S."/>
            <person name="Vandenbol M."/>
            <person name="Vannier F."/>
            <person name="Vassarotti A."/>
            <person name="Viari A."/>
            <person name="Wambutt R."/>
            <person name="Wedler E."/>
            <person name="Wedler H."/>
            <person name="Weitzenegger T."/>
            <person name="Winters P."/>
            <person name="Wipat A."/>
            <person name="Yamamoto H."/>
            <person name="Yamane K."/>
            <person name="Yasumoto K."/>
            <person name="Yata K."/>
            <person name="Yoshida K."/>
            <person name="Yoshikawa H.-F."/>
            <person name="Zumstein E."/>
            <person name="Yoshikawa H."/>
            <person name="Danchin A."/>
        </authorList>
    </citation>
    <scope>NUCLEOTIDE SEQUENCE [LARGE SCALE GENOMIC DNA]</scope>
    <source>
        <strain>168</strain>
    </source>
</reference>
<reference key="4">
    <citation type="journal article" date="2009" name="Microbiology">
        <title>From a consortium sequence to a unified sequence: the Bacillus subtilis 168 reference genome a decade later.</title>
        <authorList>
            <person name="Barbe V."/>
            <person name="Cruveiller S."/>
            <person name="Kunst F."/>
            <person name="Lenoble P."/>
            <person name="Meurice G."/>
            <person name="Sekowska A."/>
            <person name="Vallenet D."/>
            <person name="Wang T."/>
            <person name="Moszer I."/>
            <person name="Medigue C."/>
            <person name="Danchin A."/>
        </authorList>
    </citation>
    <scope>SEQUENCE REVISION TO 85</scope>
</reference>
<reference key="5">
    <citation type="journal article" date="1982" name="Mol. Gen. Genet.">
        <title>Purification and characterization of 30S ribosomal proteins from Bacillus subtilis: correlation to Escherichia coli 30S proteins.</title>
        <authorList>
            <person name="Higo K."/>
            <person name="Otaka E."/>
            <person name="Osawa S."/>
        </authorList>
    </citation>
    <scope>PROTEIN SEQUENCE OF 2-42</scope>
</reference>
<reference key="6">
    <citation type="journal article" date="1986" name="J. Bacteriol.">
        <title>Gene for the alpha subunit of Bacillus subtilis RNA polymerase maps in the ribosomal protein gene cluster.</title>
        <authorList>
            <person name="Suh J.-W."/>
            <person name="Boylan S.A."/>
            <person name="Price C.W."/>
        </authorList>
    </citation>
    <scope>NUCLEOTIDE SEQUENCE [GENOMIC DNA] OF 86-121</scope>
</reference>
<reference evidence="6 7" key="7">
    <citation type="journal article" date="2018" name="Proc. Natl. Acad. Sci. U.S.A.">
        <title>Structural basis for antibiotic resistance mediated by the Bacillus subtilis ABCF ATPase VmlR.</title>
        <authorList>
            <person name="Crowe-McAuliffe C."/>
            <person name="Graf M."/>
            <person name="Huter P."/>
            <person name="Takada H."/>
            <person name="Abdelshahid M."/>
            <person name="Novacek J."/>
            <person name="Murina V."/>
            <person name="Atkinson G.C."/>
            <person name="Hauryliuk V."/>
            <person name="Wilson D.N."/>
        </authorList>
    </citation>
    <scope>STRUCTURE BY ELECTRON MICROSCOPY (3.10 ANGSTROMS) OF 1-121 WITH AND WITHOUT VIRGINIAMYCIN M</scope>
    <scope>SUBUNIT</scope>
</reference>
<organism>
    <name type="scientific">Bacillus subtilis (strain 168)</name>
    <dbReference type="NCBI Taxonomy" id="224308"/>
    <lineage>
        <taxon>Bacteria</taxon>
        <taxon>Bacillati</taxon>
        <taxon>Bacillota</taxon>
        <taxon>Bacilli</taxon>
        <taxon>Bacillales</taxon>
        <taxon>Bacillaceae</taxon>
        <taxon>Bacillus</taxon>
    </lineage>
</organism>
<proteinExistence type="evidence at protein level"/>
<name>RS13_BACSU</name>
<evidence type="ECO:0000255" key="1">
    <source>
        <dbReference type="HAMAP-Rule" id="MF_01315"/>
    </source>
</evidence>
<evidence type="ECO:0000256" key="2">
    <source>
        <dbReference type="SAM" id="MobiDB-lite"/>
    </source>
</evidence>
<evidence type="ECO:0000269" key="3">
    <source>
    </source>
</evidence>
<evidence type="ECO:0000269" key="4">
    <source>
    </source>
</evidence>
<evidence type="ECO:0000305" key="5"/>
<evidence type="ECO:0007744" key="6">
    <source>
        <dbReference type="PDB" id="6HA1"/>
    </source>
</evidence>
<evidence type="ECO:0007744" key="7">
    <source>
        <dbReference type="PDB" id="6HA8"/>
    </source>
</evidence>
<evidence type="ECO:0007829" key="8">
    <source>
        <dbReference type="PDB" id="8CDU"/>
    </source>
</evidence>
<sequence>MARIAGVDIPRDKRVVISLTYIFGIGRTTAQQVLKEAGVSEDTRVRDLTEEELGKIRDIIDKLKVEGDLRREVSLNIKRLIEIGSYRGIRHRRGLPVRGQNSKNNARTRKGPRRTVANKKK</sequence>
<comment type="function">
    <text evidence="1">Located at the top of the head of the 30S subunit, it contacts several helices of the 16S rRNA. In the 70S ribosome it contacts the 23S rRNA (bridge B1a) and protein L5 of the 50S subunit (bridge B1b), connecting the 2 subunits; these bridges are implicated in subunit movement. Contacts the tRNAs in the A and P-sites.</text>
</comment>
<comment type="subunit">
    <text evidence="1 3">Part of the 30S ribosomal subunit (PubMed:30126986). Forms a loose heterodimer with protein S19. Forms two bridges to the 50S subunit in the 70S ribosome (By similarity).</text>
</comment>
<comment type="similarity">
    <text evidence="1">Belongs to the universal ribosomal protein uS13 family.</text>
</comment>
<keyword id="KW-0002">3D-structure</keyword>
<keyword id="KW-0903">Direct protein sequencing</keyword>
<keyword id="KW-1185">Reference proteome</keyword>
<keyword id="KW-0687">Ribonucleoprotein</keyword>
<keyword id="KW-0689">Ribosomal protein</keyword>
<keyword id="KW-0694">RNA-binding</keyword>
<keyword id="KW-0699">rRNA-binding</keyword>
<keyword id="KW-0820">tRNA-binding</keyword>
<gene>
    <name evidence="1" type="primary">rpsM</name>
    <name type="ordered locus">BSU01410</name>
</gene>